<gene>
    <name type="primary">MPV17L</name>
</gene>
<keyword id="KW-0472">Membrane</keyword>
<keyword id="KW-0576">Peroxisome</keyword>
<keyword id="KW-1185">Reference proteome</keyword>
<keyword id="KW-0812">Transmembrane</keyword>
<keyword id="KW-1133">Transmembrane helix</keyword>
<protein>
    <recommendedName>
        <fullName>Mpv17-like protein</fullName>
    </recommendedName>
    <alternativeName>
        <fullName>M-LP homolog</fullName>
        <shortName>M-LPH</shortName>
    </alternativeName>
</protein>
<dbReference type="EMBL" id="BC112608">
    <property type="protein sequence ID" value="AAI12609.1"/>
    <property type="molecule type" value="mRNA"/>
</dbReference>
<dbReference type="RefSeq" id="NP_001040067.1">
    <property type="nucleotide sequence ID" value="NM_001046602.2"/>
</dbReference>
<dbReference type="FunCoup" id="Q2KIK2">
    <property type="interactions" value="235"/>
</dbReference>
<dbReference type="STRING" id="9913.ENSBTAP00000056473"/>
<dbReference type="PaxDb" id="9913-ENSBTAP00000056473"/>
<dbReference type="GeneID" id="617491"/>
<dbReference type="KEGG" id="bta:617491"/>
<dbReference type="CTD" id="255027"/>
<dbReference type="eggNOG" id="KOG1944">
    <property type="taxonomic scope" value="Eukaryota"/>
</dbReference>
<dbReference type="InParanoid" id="Q2KIK2"/>
<dbReference type="OrthoDB" id="5345392at2759"/>
<dbReference type="Proteomes" id="UP000009136">
    <property type="component" value="Unplaced"/>
</dbReference>
<dbReference type="GO" id="GO:0005737">
    <property type="term" value="C:cytoplasm"/>
    <property type="evidence" value="ECO:0000318"/>
    <property type="project" value="GO_Central"/>
</dbReference>
<dbReference type="GO" id="GO:0005739">
    <property type="term" value="C:mitochondrion"/>
    <property type="evidence" value="ECO:0000318"/>
    <property type="project" value="GO_Central"/>
</dbReference>
<dbReference type="GO" id="GO:0005778">
    <property type="term" value="C:peroxisomal membrane"/>
    <property type="evidence" value="ECO:0007669"/>
    <property type="project" value="UniProtKB-SubCell"/>
</dbReference>
<dbReference type="GO" id="GO:0061668">
    <property type="term" value="P:mitochondrial ribosome assembly"/>
    <property type="evidence" value="ECO:0000318"/>
    <property type="project" value="GO_Central"/>
</dbReference>
<dbReference type="InterPro" id="IPR007248">
    <property type="entry name" value="Mpv17_PMP22"/>
</dbReference>
<dbReference type="PANTHER" id="PTHR11266:SF39">
    <property type="entry name" value="MPV17-LIKE PROTEIN"/>
    <property type="match status" value="1"/>
</dbReference>
<dbReference type="PANTHER" id="PTHR11266">
    <property type="entry name" value="PEROXISOMAL MEMBRANE PROTEIN 2, PXMP2 MPV17"/>
    <property type="match status" value="1"/>
</dbReference>
<dbReference type="Pfam" id="PF04117">
    <property type="entry name" value="Mpv17_PMP22"/>
    <property type="match status" value="1"/>
</dbReference>
<proteinExistence type="evidence at transcript level"/>
<comment type="function">
    <text evidence="2">Participates in reactive oxygen species metabolism by up- or down-regulation of the genes of antioxidant enzymes. Protective against the mitochondrial apoptotic cascade.</text>
</comment>
<comment type="subcellular location">
    <subcellularLocation>
        <location evidence="1">Peroxisome membrane</location>
        <topology evidence="1">Multi-pass membrane protein</topology>
    </subcellularLocation>
</comment>
<comment type="similarity">
    <text evidence="4">Belongs to the peroxisomal membrane protein PXMP2/4 family.</text>
</comment>
<reference key="1">
    <citation type="submission" date="2006-01" db="EMBL/GenBank/DDBJ databases">
        <authorList>
            <consortium name="NIH - Mammalian Gene Collection (MGC) project"/>
        </authorList>
    </citation>
    <scope>NUCLEOTIDE SEQUENCE [LARGE SCALE MRNA]</scope>
    <source>
        <strain>Hereford</strain>
        <tissue>Testis</tissue>
    </source>
</reference>
<feature type="chain" id="PRO_0000333177" description="Mpv17-like protein">
    <location>
        <begin position="1"/>
        <end position="196"/>
    </location>
</feature>
<feature type="topological domain" description="Cytoplasmic">
    <location>
        <begin position="1"/>
        <end position="16"/>
    </location>
</feature>
<feature type="transmembrane region" description="Helical" evidence="3">
    <location>
        <begin position="17"/>
        <end position="34"/>
    </location>
</feature>
<feature type="topological domain" description="Lumenal">
    <location>
        <begin position="35"/>
        <end position="50"/>
    </location>
</feature>
<feature type="transmembrane region" description="Helical" evidence="3">
    <location>
        <begin position="51"/>
        <end position="67"/>
    </location>
</feature>
<feature type="topological domain" description="Cytoplasmic">
    <location>
        <begin position="68"/>
        <end position="90"/>
    </location>
</feature>
<feature type="transmembrane region" description="Helical" evidence="3">
    <location>
        <begin position="91"/>
        <end position="108"/>
    </location>
</feature>
<feature type="topological domain" description="Lumenal">
    <location>
        <begin position="109"/>
        <end position="150"/>
    </location>
</feature>
<feature type="transmembrane region" description="Helical" evidence="3">
    <location>
        <begin position="151"/>
        <end position="167"/>
    </location>
</feature>
<feature type="topological domain" description="Cytoplasmic">
    <location>
        <begin position="168"/>
        <end position="196"/>
    </location>
</feature>
<feature type="region of interest" description="Targeting to peroxisomes" evidence="1">
    <location>
        <begin position="16"/>
        <end position="55"/>
    </location>
</feature>
<accession>Q2KIK2</accession>
<name>MP17L_BOVIN</name>
<evidence type="ECO:0000250" key="1"/>
<evidence type="ECO:0000250" key="2">
    <source>
        <dbReference type="UniProtKB" id="Q2QL34"/>
    </source>
</evidence>
<evidence type="ECO:0000255" key="3"/>
<evidence type="ECO:0000305" key="4"/>
<organism>
    <name type="scientific">Bos taurus</name>
    <name type="common">Bovine</name>
    <dbReference type="NCBI Taxonomy" id="9913"/>
    <lineage>
        <taxon>Eukaryota</taxon>
        <taxon>Metazoa</taxon>
        <taxon>Chordata</taxon>
        <taxon>Craniata</taxon>
        <taxon>Vertebrata</taxon>
        <taxon>Euteleostomi</taxon>
        <taxon>Mammalia</taxon>
        <taxon>Eutheria</taxon>
        <taxon>Laurasiatheria</taxon>
        <taxon>Artiodactyla</taxon>
        <taxon>Ruminantia</taxon>
        <taxon>Pecora</taxon>
        <taxon>Bovidae</taxon>
        <taxon>Bovinae</taxon>
        <taxon>Bos</taxon>
    </lineage>
</organism>
<sequence length="196" mass="22328">MVSWWQALTRAAGRYPWPANVLLYAGFFSGGDALQQVLRGGPADWQHTRHVATVAVAFHANLNYVWLNLLERALPGRAPRTILAKVLCDQALGGPVYVSTFYAGMSILQGKDDIFLDMRQKFWNTYKSGLMYWPFVQLINFSLIPIRWRTAYTGLCGFLWATFLCFSQQEGDGTFKSAFTFRRIKVTNEVEKPSEK</sequence>